<accession>Q2NUV0</accession>
<reference key="1">
    <citation type="journal article" date="2006" name="Genome Res.">
        <title>Massive genome erosion and functional adaptations provide insights into the symbiotic lifestyle of Sodalis glossinidius in the tsetse host.</title>
        <authorList>
            <person name="Toh H."/>
            <person name="Weiss B.L."/>
            <person name="Perkin S.A.H."/>
            <person name="Yamashita A."/>
            <person name="Oshima K."/>
            <person name="Hattori M."/>
            <person name="Aksoy S."/>
        </authorList>
    </citation>
    <scope>NUCLEOTIDE SEQUENCE [LARGE SCALE GENOMIC DNA]</scope>
    <source>
        <strain>morsitans</strain>
    </source>
</reference>
<evidence type="ECO:0000255" key="1">
    <source>
        <dbReference type="HAMAP-Rule" id="MF_00244"/>
    </source>
</evidence>
<proteinExistence type="inferred from homology"/>
<gene>
    <name evidence="1" type="primary">nadD</name>
    <name type="ordered locus">SG0800</name>
</gene>
<sequence>MMSERALTAFYGGTFDPIHYGHLRPVIALARLVNLQRVILLPNNVPPHRPQPVASAQQRLAMARLAIAELPDPIFTLDERELQRPTPSYTVDTFEALRREYGPDSPLAFIIGQDSLLTLTQWHRGLELPALCHLLVCARPGYDYGLADERDNRWLARRLTRDPQALHQQPAGLIYCAATQQLAISASDIRARYREGRACDGLLPPSVQGYIDAQGLYR</sequence>
<keyword id="KW-0067">ATP-binding</keyword>
<keyword id="KW-0520">NAD</keyword>
<keyword id="KW-0547">Nucleotide-binding</keyword>
<keyword id="KW-0548">Nucleotidyltransferase</keyword>
<keyword id="KW-0662">Pyridine nucleotide biosynthesis</keyword>
<keyword id="KW-0808">Transferase</keyword>
<name>NADD_SODGM</name>
<organism>
    <name type="scientific">Sodalis glossinidius (strain morsitans)</name>
    <dbReference type="NCBI Taxonomy" id="343509"/>
    <lineage>
        <taxon>Bacteria</taxon>
        <taxon>Pseudomonadati</taxon>
        <taxon>Pseudomonadota</taxon>
        <taxon>Gammaproteobacteria</taxon>
        <taxon>Enterobacterales</taxon>
        <taxon>Bruguierivoracaceae</taxon>
        <taxon>Sodalis</taxon>
    </lineage>
</organism>
<protein>
    <recommendedName>
        <fullName evidence="1">Probable nicotinate-nucleotide adenylyltransferase</fullName>
        <ecNumber evidence="1">2.7.7.18</ecNumber>
    </recommendedName>
    <alternativeName>
        <fullName evidence="1">Deamido-NAD(+) diphosphorylase</fullName>
    </alternativeName>
    <alternativeName>
        <fullName evidence="1">Deamido-NAD(+) pyrophosphorylase</fullName>
    </alternativeName>
    <alternativeName>
        <fullName evidence="1">Nicotinate mononucleotide adenylyltransferase</fullName>
        <shortName evidence="1">NaMN adenylyltransferase</shortName>
    </alternativeName>
</protein>
<dbReference type="EC" id="2.7.7.18" evidence="1"/>
<dbReference type="EMBL" id="AP008232">
    <property type="protein sequence ID" value="BAE74075.1"/>
    <property type="molecule type" value="Genomic_DNA"/>
</dbReference>
<dbReference type="SMR" id="Q2NUV0"/>
<dbReference type="STRING" id="343509.SG0800"/>
<dbReference type="KEGG" id="sgl:SG0800"/>
<dbReference type="eggNOG" id="COG1057">
    <property type="taxonomic scope" value="Bacteria"/>
</dbReference>
<dbReference type="HOGENOM" id="CLU_069765_0_0_6"/>
<dbReference type="UniPathway" id="UPA00253">
    <property type="reaction ID" value="UER00332"/>
</dbReference>
<dbReference type="Proteomes" id="UP000001932">
    <property type="component" value="Chromosome"/>
</dbReference>
<dbReference type="GO" id="GO:0005524">
    <property type="term" value="F:ATP binding"/>
    <property type="evidence" value="ECO:0007669"/>
    <property type="project" value="UniProtKB-KW"/>
</dbReference>
<dbReference type="GO" id="GO:0004515">
    <property type="term" value="F:nicotinate-nucleotide adenylyltransferase activity"/>
    <property type="evidence" value="ECO:0007669"/>
    <property type="project" value="UniProtKB-UniRule"/>
</dbReference>
<dbReference type="GO" id="GO:0009435">
    <property type="term" value="P:NAD biosynthetic process"/>
    <property type="evidence" value="ECO:0007669"/>
    <property type="project" value="UniProtKB-UniRule"/>
</dbReference>
<dbReference type="CDD" id="cd02165">
    <property type="entry name" value="NMNAT"/>
    <property type="match status" value="1"/>
</dbReference>
<dbReference type="FunFam" id="3.40.50.620:FF:000039">
    <property type="entry name" value="Probable nicotinate-nucleotide adenylyltransferase"/>
    <property type="match status" value="1"/>
</dbReference>
<dbReference type="Gene3D" id="3.40.50.620">
    <property type="entry name" value="HUPs"/>
    <property type="match status" value="1"/>
</dbReference>
<dbReference type="HAMAP" id="MF_00244">
    <property type="entry name" value="NaMN_adenylyltr"/>
    <property type="match status" value="1"/>
</dbReference>
<dbReference type="InterPro" id="IPR004821">
    <property type="entry name" value="Cyt_trans-like"/>
</dbReference>
<dbReference type="InterPro" id="IPR005248">
    <property type="entry name" value="NadD/NMNAT"/>
</dbReference>
<dbReference type="InterPro" id="IPR014729">
    <property type="entry name" value="Rossmann-like_a/b/a_fold"/>
</dbReference>
<dbReference type="NCBIfam" id="TIGR00125">
    <property type="entry name" value="cyt_tran_rel"/>
    <property type="match status" value="1"/>
</dbReference>
<dbReference type="NCBIfam" id="TIGR00482">
    <property type="entry name" value="nicotinate (nicotinamide) nucleotide adenylyltransferase"/>
    <property type="match status" value="1"/>
</dbReference>
<dbReference type="NCBIfam" id="NF000839">
    <property type="entry name" value="PRK00071.1-1"/>
    <property type="match status" value="1"/>
</dbReference>
<dbReference type="PANTHER" id="PTHR39321">
    <property type="entry name" value="NICOTINATE-NUCLEOTIDE ADENYLYLTRANSFERASE-RELATED"/>
    <property type="match status" value="1"/>
</dbReference>
<dbReference type="PANTHER" id="PTHR39321:SF3">
    <property type="entry name" value="PHOSPHOPANTETHEINE ADENYLYLTRANSFERASE"/>
    <property type="match status" value="1"/>
</dbReference>
<dbReference type="Pfam" id="PF01467">
    <property type="entry name" value="CTP_transf_like"/>
    <property type="match status" value="1"/>
</dbReference>
<dbReference type="SUPFAM" id="SSF52374">
    <property type="entry name" value="Nucleotidylyl transferase"/>
    <property type="match status" value="1"/>
</dbReference>
<comment type="function">
    <text evidence="1">Catalyzes the reversible adenylation of nicotinate mononucleotide (NaMN) to nicotinic acid adenine dinucleotide (NaAD).</text>
</comment>
<comment type="catalytic activity">
    <reaction evidence="1">
        <text>nicotinate beta-D-ribonucleotide + ATP + H(+) = deamido-NAD(+) + diphosphate</text>
        <dbReference type="Rhea" id="RHEA:22860"/>
        <dbReference type="ChEBI" id="CHEBI:15378"/>
        <dbReference type="ChEBI" id="CHEBI:30616"/>
        <dbReference type="ChEBI" id="CHEBI:33019"/>
        <dbReference type="ChEBI" id="CHEBI:57502"/>
        <dbReference type="ChEBI" id="CHEBI:58437"/>
        <dbReference type="EC" id="2.7.7.18"/>
    </reaction>
</comment>
<comment type="pathway">
    <text evidence="1">Cofactor biosynthesis; NAD(+) biosynthesis; deamido-NAD(+) from nicotinate D-ribonucleotide: step 1/1.</text>
</comment>
<comment type="similarity">
    <text evidence="1">Belongs to the NadD family.</text>
</comment>
<feature type="chain" id="PRO_0000336738" description="Probable nicotinate-nucleotide adenylyltransferase">
    <location>
        <begin position="1"/>
        <end position="218"/>
    </location>
</feature>